<reference key="1">
    <citation type="journal article" date="2003" name="Nucleic Acids Res.">
        <title>The complete genome sequence and analysis of Corynebacterium diphtheriae NCTC13129.</title>
        <authorList>
            <person name="Cerdeno-Tarraga A.-M."/>
            <person name="Efstratiou A."/>
            <person name="Dover L.G."/>
            <person name="Holden M.T.G."/>
            <person name="Pallen M.J."/>
            <person name="Bentley S.D."/>
            <person name="Besra G.S."/>
            <person name="Churcher C.M."/>
            <person name="James K.D."/>
            <person name="De Zoysa A."/>
            <person name="Chillingworth T."/>
            <person name="Cronin A."/>
            <person name="Dowd L."/>
            <person name="Feltwell T."/>
            <person name="Hamlin N."/>
            <person name="Holroyd S."/>
            <person name="Jagels K."/>
            <person name="Moule S."/>
            <person name="Quail M.A."/>
            <person name="Rabbinowitsch E."/>
            <person name="Rutherford K.M."/>
            <person name="Thomson N.R."/>
            <person name="Unwin L."/>
            <person name="Whitehead S."/>
            <person name="Barrell B.G."/>
            <person name="Parkhill J."/>
        </authorList>
    </citation>
    <scope>NUCLEOTIDE SEQUENCE [LARGE SCALE GENOMIC DNA]</scope>
    <source>
        <strain>ATCC 700971 / NCTC 13129 / Biotype gravis</strain>
    </source>
</reference>
<comment type="function">
    <text evidence="1">DNA-dependent RNA polymerase catalyzes the transcription of DNA into RNA using the four ribonucleoside triphosphates as substrates.</text>
</comment>
<comment type="catalytic activity">
    <reaction evidence="1">
        <text>RNA(n) + a ribonucleoside 5'-triphosphate = RNA(n+1) + diphosphate</text>
        <dbReference type="Rhea" id="RHEA:21248"/>
        <dbReference type="Rhea" id="RHEA-COMP:14527"/>
        <dbReference type="Rhea" id="RHEA-COMP:17342"/>
        <dbReference type="ChEBI" id="CHEBI:33019"/>
        <dbReference type="ChEBI" id="CHEBI:61557"/>
        <dbReference type="ChEBI" id="CHEBI:140395"/>
        <dbReference type="EC" id="2.7.7.6"/>
    </reaction>
</comment>
<comment type="subunit">
    <text evidence="1">The RNAP catalytic core consists of 2 alpha, 1 beta, 1 beta' and 1 omega subunit. When a sigma factor is associated with the core the holoenzyme is formed, which can initiate transcription.</text>
</comment>
<comment type="similarity">
    <text evidence="1">Belongs to the RNA polymerase beta chain family.</text>
</comment>
<keyword id="KW-0240">DNA-directed RNA polymerase</keyword>
<keyword id="KW-0548">Nucleotidyltransferase</keyword>
<keyword id="KW-1185">Reference proteome</keyword>
<keyword id="KW-0804">Transcription</keyword>
<keyword id="KW-0808">Transferase</keyword>
<accession>P60280</accession>
<name>RPOB_CORDI</name>
<sequence length="1175" mass="129791">MVNIAGPPPREVLEGPILAVSRQTKANIPGAPERKSFAKITEPIEVPGLLDIQLNSFAWLIGTPEWRARQQEELGDSVRVTSGLEDILEELSPIQDYSGNMSLSLSEPRFEDMKNTIDECKDKDINYSAPLYVTAEFINNETQEIKSQTVFIGDFPMMTDKGTFIVNGTERVVVSQLVRSPGVYFDQTIDKSTERPLHSVKVIPSRGAWLEFDVDKRDTVGVRIDRKRRQPVTVLLKALGWTTEQITERFGFSEIMMSTLESDGVSNTDEALLEIYRKQRPGEQPTRDLAQSLLDNSFFRAKRYDLAKVGRYKVNRKLGLGGDNEGLMTLTEEDIATTLEYLVRLHAGETTMTSPTGEVIPVETDDIDHFGNRRLRTVGELIQNQVRVGLSRMERVVRERMTTQDAESITPTSLINVRPVSAAIREFFGTSQLSQFMDQNNSLSGLTHKRRLSALGPGGLSRERAGIEVRDVHASHYGRMCPIETPEGPNIGLIGSLASYARVNAFGFIETPYRKVENGVLTDQIDYLTADEEDRFVVAQANVEHDADGKITADSVTVRVKNGDIQVVAPESVDYLDVSPRQMVSVATAMIPFLEHDDANRALMGANMQRQAVPLVRSEAPFVGTGMERAAAYDAGDLIINKKGGVVENVSADIITVMADDGTRETYILRKFERTNQGTCYNQTPLVNIGDRVEAGQVLADGPGTHNGEMSLGRNLLVAFMPWEGHNYEDAIILNQRVVEEDILTSIHIEEHEIDARDTKLGPEEITREIPNVSEDVLKDLDERGIVRIGADVRDGDILVGKVTPKGETELTPEERLLRAIFGEKAREVRDTSMKVPHGETGKVIGVRRFSRDDDDDLAPGVNEMIRVYVAQKRKIQDGDKLAGRHGNKGVVGKILPQEDMPFMPDGTPVDIILNTHGVPRRMNIGQVLEVHLGWLAAAGWKIDTEDPANAELLKTLPEDLYDVPAGSLTATPVFDGATNEEIAGLLGNSRPNRDGDVMVDENGKATLFDGRSGEPFPYPVSVGYMYILKLHHLVDEKIHARSTGPYSMITQQPLGGKAQFGGQRFGEMEVWAMQAYGAAYTLQELLTIKSDDVVGRVKVYEAIVKGENIPDPGIPESFKVLLKELQSLCLNVEVLSADGTPMELSGSDDDEFDQAGASLGINLSRDERSDADIA</sequence>
<feature type="chain" id="PRO_0000047887" description="DNA-directed RNA polymerase subunit beta">
    <location>
        <begin position="1"/>
        <end position="1175"/>
    </location>
</feature>
<feature type="region of interest" description="Disordered" evidence="2">
    <location>
        <begin position="1142"/>
        <end position="1175"/>
    </location>
</feature>
<feature type="compositionally biased region" description="Basic and acidic residues" evidence="2">
    <location>
        <begin position="1165"/>
        <end position="1175"/>
    </location>
</feature>
<gene>
    <name evidence="1" type="primary">rpoB</name>
    <name type="ordered locus">DIP0446</name>
</gene>
<proteinExistence type="inferred from homology"/>
<protein>
    <recommendedName>
        <fullName evidence="1">DNA-directed RNA polymerase subunit beta</fullName>
        <shortName evidence="1">RNAP subunit beta</shortName>
        <ecNumber evidence="1">2.7.7.6</ecNumber>
    </recommendedName>
    <alternativeName>
        <fullName evidence="1">RNA polymerase subunit beta</fullName>
    </alternativeName>
    <alternativeName>
        <fullName evidence="1">Transcriptase subunit beta</fullName>
    </alternativeName>
</protein>
<evidence type="ECO:0000255" key="1">
    <source>
        <dbReference type="HAMAP-Rule" id="MF_01321"/>
    </source>
</evidence>
<evidence type="ECO:0000256" key="2">
    <source>
        <dbReference type="SAM" id="MobiDB-lite"/>
    </source>
</evidence>
<organism>
    <name type="scientific">Corynebacterium diphtheriae (strain ATCC 700971 / NCTC 13129 / Biotype gravis)</name>
    <dbReference type="NCBI Taxonomy" id="257309"/>
    <lineage>
        <taxon>Bacteria</taxon>
        <taxon>Bacillati</taxon>
        <taxon>Actinomycetota</taxon>
        <taxon>Actinomycetes</taxon>
        <taxon>Mycobacteriales</taxon>
        <taxon>Corynebacteriaceae</taxon>
        <taxon>Corynebacterium</taxon>
    </lineage>
</organism>
<dbReference type="EC" id="2.7.7.6" evidence="1"/>
<dbReference type="EMBL" id="BX248355">
    <property type="protein sequence ID" value="CAE48951.1"/>
    <property type="molecule type" value="Genomic_DNA"/>
</dbReference>
<dbReference type="SMR" id="P60280"/>
<dbReference type="STRING" id="257309.DIP0446"/>
<dbReference type="KEGG" id="cdi:DIP0446"/>
<dbReference type="HOGENOM" id="CLU_000524_4_3_11"/>
<dbReference type="Proteomes" id="UP000002198">
    <property type="component" value="Chromosome"/>
</dbReference>
<dbReference type="GO" id="GO:0000428">
    <property type="term" value="C:DNA-directed RNA polymerase complex"/>
    <property type="evidence" value="ECO:0007669"/>
    <property type="project" value="UniProtKB-KW"/>
</dbReference>
<dbReference type="GO" id="GO:0003677">
    <property type="term" value="F:DNA binding"/>
    <property type="evidence" value="ECO:0007669"/>
    <property type="project" value="UniProtKB-UniRule"/>
</dbReference>
<dbReference type="GO" id="GO:0003899">
    <property type="term" value="F:DNA-directed RNA polymerase activity"/>
    <property type="evidence" value="ECO:0007669"/>
    <property type="project" value="UniProtKB-UniRule"/>
</dbReference>
<dbReference type="GO" id="GO:0032549">
    <property type="term" value="F:ribonucleoside binding"/>
    <property type="evidence" value="ECO:0007669"/>
    <property type="project" value="InterPro"/>
</dbReference>
<dbReference type="GO" id="GO:0006351">
    <property type="term" value="P:DNA-templated transcription"/>
    <property type="evidence" value="ECO:0007669"/>
    <property type="project" value="UniProtKB-UniRule"/>
</dbReference>
<dbReference type="CDD" id="cd00653">
    <property type="entry name" value="RNA_pol_B_RPB2"/>
    <property type="match status" value="1"/>
</dbReference>
<dbReference type="Gene3D" id="2.40.50.100">
    <property type="match status" value="1"/>
</dbReference>
<dbReference type="Gene3D" id="2.40.50.150">
    <property type="match status" value="1"/>
</dbReference>
<dbReference type="Gene3D" id="3.90.1100.10">
    <property type="match status" value="1"/>
</dbReference>
<dbReference type="Gene3D" id="2.30.150.10">
    <property type="entry name" value="DNA-directed RNA polymerase, beta subunit, external 1 domain"/>
    <property type="match status" value="1"/>
</dbReference>
<dbReference type="Gene3D" id="2.40.270.10">
    <property type="entry name" value="DNA-directed RNA polymerase, subunit 2, domain 6"/>
    <property type="match status" value="1"/>
</dbReference>
<dbReference type="Gene3D" id="3.90.1800.10">
    <property type="entry name" value="RNA polymerase alpha subunit dimerisation domain"/>
    <property type="match status" value="1"/>
</dbReference>
<dbReference type="Gene3D" id="3.90.1110.10">
    <property type="entry name" value="RNA polymerase Rpb2, domain 2"/>
    <property type="match status" value="1"/>
</dbReference>
<dbReference type="HAMAP" id="MF_01321">
    <property type="entry name" value="RNApol_bact_RpoB"/>
    <property type="match status" value="1"/>
</dbReference>
<dbReference type="InterPro" id="IPR042107">
    <property type="entry name" value="DNA-dir_RNA_pol_bsu_ext_1_sf"/>
</dbReference>
<dbReference type="InterPro" id="IPR019462">
    <property type="entry name" value="DNA-dir_RNA_pol_bsu_external_1"/>
</dbReference>
<dbReference type="InterPro" id="IPR015712">
    <property type="entry name" value="DNA-dir_RNA_pol_su2"/>
</dbReference>
<dbReference type="InterPro" id="IPR007120">
    <property type="entry name" value="DNA-dir_RNAP_su2_dom"/>
</dbReference>
<dbReference type="InterPro" id="IPR037033">
    <property type="entry name" value="DNA-dir_RNAP_su2_hyb_sf"/>
</dbReference>
<dbReference type="InterPro" id="IPR010243">
    <property type="entry name" value="RNA_pol_bsu_bac"/>
</dbReference>
<dbReference type="InterPro" id="IPR007121">
    <property type="entry name" value="RNA_pol_bsu_CS"/>
</dbReference>
<dbReference type="InterPro" id="IPR007644">
    <property type="entry name" value="RNA_pol_bsu_protrusion"/>
</dbReference>
<dbReference type="InterPro" id="IPR007642">
    <property type="entry name" value="RNA_pol_Rpb2_2"/>
</dbReference>
<dbReference type="InterPro" id="IPR037034">
    <property type="entry name" value="RNA_pol_Rpb2_2_sf"/>
</dbReference>
<dbReference type="InterPro" id="IPR007645">
    <property type="entry name" value="RNA_pol_Rpb2_3"/>
</dbReference>
<dbReference type="InterPro" id="IPR007641">
    <property type="entry name" value="RNA_pol_Rpb2_7"/>
</dbReference>
<dbReference type="InterPro" id="IPR014724">
    <property type="entry name" value="RNA_pol_RPB2_OB-fold"/>
</dbReference>
<dbReference type="NCBIfam" id="NF001616">
    <property type="entry name" value="PRK00405.1"/>
    <property type="match status" value="1"/>
</dbReference>
<dbReference type="NCBIfam" id="TIGR02013">
    <property type="entry name" value="rpoB"/>
    <property type="match status" value="1"/>
</dbReference>
<dbReference type="PANTHER" id="PTHR20856">
    <property type="entry name" value="DNA-DIRECTED RNA POLYMERASE I SUBUNIT 2"/>
    <property type="match status" value="1"/>
</dbReference>
<dbReference type="Pfam" id="PF04563">
    <property type="entry name" value="RNA_pol_Rpb2_1"/>
    <property type="match status" value="1"/>
</dbReference>
<dbReference type="Pfam" id="PF04561">
    <property type="entry name" value="RNA_pol_Rpb2_2"/>
    <property type="match status" value="1"/>
</dbReference>
<dbReference type="Pfam" id="PF04565">
    <property type="entry name" value="RNA_pol_Rpb2_3"/>
    <property type="match status" value="1"/>
</dbReference>
<dbReference type="Pfam" id="PF10385">
    <property type="entry name" value="RNA_pol_Rpb2_45"/>
    <property type="match status" value="1"/>
</dbReference>
<dbReference type="Pfam" id="PF00562">
    <property type="entry name" value="RNA_pol_Rpb2_6"/>
    <property type="match status" value="1"/>
</dbReference>
<dbReference type="Pfam" id="PF04560">
    <property type="entry name" value="RNA_pol_Rpb2_7"/>
    <property type="match status" value="1"/>
</dbReference>
<dbReference type="SUPFAM" id="SSF64484">
    <property type="entry name" value="beta and beta-prime subunits of DNA dependent RNA-polymerase"/>
    <property type="match status" value="1"/>
</dbReference>
<dbReference type="PROSITE" id="PS01166">
    <property type="entry name" value="RNA_POL_BETA"/>
    <property type="match status" value="1"/>
</dbReference>